<feature type="chain" id="PRO_0000161687" description="Basic phospholipase A2 PA-12A">
    <location>
        <begin position="1"/>
        <end position="118"/>
    </location>
</feature>
<feature type="active site" evidence="1">
    <location>
        <position position="48"/>
    </location>
</feature>
<feature type="active site" evidence="1">
    <location>
        <position position="92"/>
    </location>
</feature>
<feature type="binding site" evidence="1">
    <location>
        <position position="28"/>
    </location>
    <ligand>
        <name>Ca(2+)</name>
        <dbReference type="ChEBI" id="CHEBI:29108"/>
    </ligand>
</feature>
<feature type="binding site" evidence="1">
    <location>
        <position position="30"/>
    </location>
    <ligand>
        <name>Ca(2+)</name>
        <dbReference type="ChEBI" id="CHEBI:29108"/>
    </ligand>
</feature>
<feature type="binding site" evidence="1">
    <location>
        <position position="32"/>
    </location>
    <ligand>
        <name>Ca(2+)</name>
        <dbReference type="ChEBI" id="CHEBI:29108"/>
    </ligand>
</feature>
<feature type="binding site" evidence="1">
    <location>
        <position position="49"/>
    </location>
    <ligand>
        <name>Ca(2+)</name>
        <dbReference type="ChEBI" id="CHEBI:29108"/>
    </ligand>
</feature>
<feature type="disulfide bond" evidence="1">
    <location>
        <begin position="11"/>
        <end position="71"/>
    </location>
</feature>
<feature type="disulfide bond" evidence="1">
    <location>
        <begin position="27"/>
        <end position="117"/>
    </location>
</feature>
<feature type="disulfide bond" evidence="1">
    <location>
        <begin position="29"/>
        <end position="45"/>
    </location>
</feature>
<feature type="disulfide bond" evidence="1">
    <location>
        <begin position="44"/>
        <end position="98"/>
    </location>
</feature>
<feature type="disulfide bond" evidence="1">
    <location>
        <begin position="51"/>
        <end position="91"/>
    </location>
</feature>
<feature type="disulfide bond" evidence="1">
    <location>
        <begin position="60"/>
        <end position="84"/>
    </location>
</feature>
<feature type="disulfide bond" evidence="1">
    <location>
        <begin position="78"/>
        <end position="89"/>
    </location>
</feature>
<comment type="function">
    <text>PLA2 catalyzes the calcium-dependent hydrolysis of the 2-acyl groups in 3-sn-phosphoglycerides.</text>
</comment>
<comment type="catalytic activity">
    <reaction evidence="2 3">
        <text>a 1,2-diacyl-sn-glycero-3-phosphocholine + H2O = a 1-acyl-sn-glycero-3-phosphocholine + a fatty acid + H(+)</text>
        <dbReference type="Rhea" id="RHEA:15801"/>
        <dbReference type="ChEBI" id="CHEBI:15377"/>
        <dbReference type="ChEBI" id="CHEBI:15378"/>
        <dbReference type="ChEBI" id="CHEBI:28868"/>
        <dbReference type="ChEBI" id="CHEBI:57643"/>
        <dbReference type="ChEBI" id="CHEBI:58168"/>
        <dbReference type="EC" id="3.1.1.4"/>
    </reaction>
</comment>
<comment type="cofactor">
    <cofactor evidence="1">
        <name>Ca(2+)</name>
        <dbReference type="ChEBI" id="CHEBI:29108"/>
    </cofactor>
    <text evidence="1">Binds 1 Ca(2+) ion.</text>
</comment>
<comment type="subcellular location">
    <subcellularLocation>
        <location>Secreted</location>
    </subcellularLocation>
</comment>
<comment type="tissue specificity">
    <text>Expressed by the venom gland.</text>
</comment>
<comment type="toxic dose">
    <text evidence="4">LD(50) is 0.23 mg/kg by intravenous injection.</text>
</comment>
<comment type="similarity">
    <text evidence="5">Belongs to the phospholipase A2 family. Group I subfamily. D49 sub-subfamily.</text>
</comment>
<name>PA2BF_PSEAU</name>
<evidence type="ECO:0000250" key="1"/>
<evidence type="ECO:0000255" key="2">
    <source>
        <dbReference type="PROSITE-ProRule" id="PRU10035"/>
    </source>
</evidence>
<evidence type="ECO:0000255" key="3">
    <source>
        <dbReference type="PROSITE-ProRule" id="PRU10036"/>
    </source>
</evidence>
<evidence type="ECO:0000269" key="4">
    <source>
    </source>
</evidence>
<evidence type="ECO:0000305" key="5"/>
<sequence>NLIQFGNMIQCANKGSRPSLNYADYGCYCGWGGSGTPVDELDRCCQVHDNCYEQAGKKGCFPKLTLYSWKCTGNVPTCNSKTGCKSFVCACDAAAAKCFAKAPYKKENYNIDTKKRCK</sequence>
<accession>P20255</accession>
<dbReference type="EC" id="3.1.1.4"/>
<dbReference type="PIR" id="F34860">
    <property type="entry name" value="F34860"/>
</dbReference>
<dbReference type="SMR" id="P20255"/>
<dbReference type="GO" id="GO:0005576">
    <property type="term" value="C:extracellular region"/>
    <property type="evidence" value="ECO:0007669"/>
    <property type="project" value="UniProtKB-SubCell"/>
</dbReference>
<dbReference type="GO" id="GO:0005509">
    <property type="term" value="F:calcium ion binding"/>
    <property type="evidence" value="ECO:0007669"/>
    <property type="project" value="InterPro"/>
</dbReference>
<dbReference type="GO" id="GO:0047498">
    <property type="term" value="F:calcium-dependent phospholipase A2 activity"/>
    <property type="evidence" value="ECO:0007669"/>
    <property type="project" value="TreeGrafter"/>
</dbReference>
<dbReference type="GO" id="GO:0005543">
    <property type="term" value="F:phospholipid binding"/>
    <property type="evidence" value="ECO:0007669"/>
    <property type="project" value="TreeGrafter"/>
</dbReference>
<dbReference type="GO" id="GO:0050482">
    <property type="term" value="P:arachidonate secretion"/>
    <property type="evidence" value="ECO:0007669"/>
    <property type="project" value="InterPro"/>
</dbReference>
<dbReference type="GO" id="GO:0016042">
    <property type="term" value="P:lipid catabolic process"/>
    <property type="evidence" value="ECO:0007669"/>
    <property type="project" value="UniProtKB-KW"/>
</dbReference>
<dbReference type="GO" id="GO:0006644">
    <property type="term" value="P:phospholipid metabolic process"/>
    <property type="evidence" value="ECO:0007669"/>
    <property type="project" value="InterPro"/>
</dbReference>
<dbReference type="CDD" id="cd00125">
    <property type="entry name" value="PLA2c"/>
    <property type="match status" value="1"/>
</dbReference>
<dbReference type="FunFam" id="1.20.90.10:FF:000007">
    <property type="entry name" value="Acidic phospholipase A2"/>
    <property type="match status" value="1"/>
</dbReference>
<dbReference type="Gene3D" id="1.20.90.10">
    <property type="entry name" value="Phospholipase A2 domain"/>
    <property type="match status" value="1"/>
</dbReference>
<dbReference type="InterPro" id="IPR001211">
    <property type="entry name" value="PLipase_A2"/>
</dbReference>
<dbReference type="InterPro" id="IPR033112">
    <property type="entry name" value="PLipase_A2_Asp_AS"/>
</dbReference>
<dbReference type="InterPro" id="IPR016090">
    <property type="entry name" value="PLipase_A2_dom"/>
</dbReference>
<dbReference type="InterPro" id="IPR036444">
    <property type="entry name" value="PLipase_A2_dom_sf"/>
</dbReference>
<dbReference type="InterPro" id="IPR033113">
    <property type="entry name" value="PLipase_A2_His_AS"/>
</dbReference>
<dbReference type="PANTHER" id="PTHR11716:SF51">
    <property type="entry name" value="PHOSPHOLIPASE A2"/>
    <property type="match status" value="1"/>
</dbReference>
<dbReference type="PANTHER" id="PTHR11716">
    <property type="entry name" value="PHOSPHOLIPASE A2 FAMILY MEMBER"/>
    <property type="match status" value="1"/>
</dbReference>
<dbReference type="Pfam" id="PF00068">
    <property type="entry name" value="Phospholip_A2_1"/>
    <property type="match status" value="1"/>
</dbReference>
<dbReference type="PRINTS" id="PR00389">
    <property type="entry name" value="PHPHLIPASEA2"/>
</dbReference>
<dbReference type="SMART" id="SM00085">
    <property type="entry name" value="PA2c"/>
    <property type="match status" value="1"/>
</dbReference>
<dbReference type="SUPFAM" id="SSF48619">
    <property type="entry name" value="Phospholipase A2, PLA2"/>
    <property type="match status" value="1"/>
</dbReference>
<dbReference type="PROSITE" id="PS00119">
    <property type="entry name" value="PA2_ASP"/>
    <property type="match status" value="1"/>
</dbReference>
<dbReference type="PROSITE" id="PS00118">
    <property type="entry name" value="PA2_HIS"/>
    <property type="match status" value="1"/>
</dbReference>
<keyword id="KW-0106">Calcium</keyword>
<keyword id="KW-0903">Direct protein sequencing</keyword>
<keyword id="KW-1015">Disulfide bond</keyword>
<keyword id="KW-0378">Hydrolase</keyword>
<keyword id="KW-0442">Lipid degradation</keyword>
<keyword id="KW-0443">Lipid metabolism</keyword>
<keyword id="KW-0479">Metal-binding</keyword>
<keyword id="KW-0964">Secreted</keyword>
<organism>
    <name type="scientific">Pseudechis australis</name>
    <name type="common">Mulga snake</name>
    <name type="synonym">King brown snake</name>
    <dbReference type="NCBI Taxonomy" id="8670"/>
    <lineage>
        <taxon>Eukaryota</taxon>
        <taxon>Metazoa</taxon>
        <taxon>Chordata</taxon>
        <taxon>Craniata</taxon>
        <taxon>Vertebrata</taxon>
        <taxon>Euteleostomi</taxon>
        <taxon>Lepidosauria</taxon>
        <taxon>Squamata</taxon>
        <taxon>Bifurcata</taxon>
        <taxon>Unidentata</taxon>
        <taxon>Episquamata</taxon>
        <taxon>Toxicofera</taxon>
        <taxon>Serpentes</taxon>
        <taxon>Colubroidea</taxon>
        <taxon>Elapidae</taxon>
        <taxon>Hydrophiinae</taxon>
        <taxon>Pseudechis</taxon>
    </lineage>
</organism>
<proteinExistence type="evidence at protein level"/>
<protein>
    <recommendedName>
        <fullName>Basic phospholipase A2 PA-12A</fullName>
        <shortName>svPLA2</shortName>
        <ecNumber>3.1.1.4</ecNumber>
    </recommendedName>
    <alternativeName>
        <fullName>Phosphatidylcholine 2-acylhydrolase</fullName>
    </alternativeName>
</protein>
<reference key="1">
    <citation type="journal article" date="1990" name="Toxicon">
        <title>Amino acid sequences of eight phospholipases A2 from the venom of Australian king brown snake, Pseudechis australis.</title>
        <authorList>
            <person name="Takasaki C."/>
            <person name="Yutani F."/>
            <person name="Kajiyashiki T."/>
        </authorList>
    </citation>
    <scope>PROTEIN SEQUENCE</scope>
    <scope>TOXIC DOSE</scope>
    <source>
        <tissue>Venom</tissue>
    </source>
</reference>